<dbReference type="EC" id="1.-.-.-" evidence="2"/>
<dbReference type="EMBL" id="KV878980">
    <property type="protein sequence ID" value="OJJ98498.1"/>
    <property type="molecule type" value="Genomic_DNA"/>
</dbReference>
<dbReference type="RefSeq" id="XP_020054838.1">
    <property type="nucleotide sequence ID" value="XM_020203738.1"/>
</dbReference>
<dbReference type="SMR" id="A0A1L9WQW4"/>
<dbReference type="STRING" id="690307.A0A1L9WQW4"/>
<dbReference type="GeneID" id="30977552"/>
<dbReference type="VEuPathDB" id="FungiDB:ASPACDRAFT_62004"/>
<dbReference type="OMA" id="LMEYHST"/>
<dbReference type="OrthoDB" id="10029320at2759"/>
<dbReference type="Proteomes" id="UP000184546">
    <property type="component" value="Unassembled WGS sequence"/>
</dbReference>
<dbReference type="GO" id="GO:0020037">
    <property type="term" value="F:heme binding"/>
    <property type="evidence" value="ECO:0007669"/>
    <property type="project" value="InterPro"/>
</dbReference>
<dbReference type="GO" id="GO:0005506">
    <property type="term" value="F:iron ion binding"/>
    <property type="evidence" value="ECO:0007669"/>
    <property type="project" value="InterPro"/>
</dbReference>
<dbReference type="GO" id="GO:0004497">
    <property type="term" value="F:monooxygenase activity"/>
    <property type="evidence" value="ECO:0007669"/>
    <property type="project" value="UniProtKB-KW"/>
</dbReference>
<dbReference type="GO" id="GO:0016705">
    <property type="term" value="F:oxidoreductase activity, acting on paired donors, with incorporation or reduction of molecular oxygen"/>
    <property type="evidence" value="ECO:0007669"/>
    <property type="project" value="InterPro"/>
</dbReference>
<dbReference type="CDD" id="cd11051">
    <property type="entry name" value="CYP59-like"/>
    <property type="match status" value="1"/>
</dbReference>
<dbReference type="Gene3D" id="1.10.630.10">
    <property type="entry name" value="Cytochrome P450"/>
    <property type="match status" value="1"/>
</dbReference>
<dbReference type="InterPro" id="IPR001128">
    <property type="entry name" value="Cyt_P450"/>
</dbReference>
<dbReference type="InterPro" id="IPR002403">
    <property type="entry name" value="Cyt_P450_E_grp-IV"/>
</dbReference>
<dbReference type="InterPro" id="IPR036396">
    <property type="entry name" value="Cyt_P450_sf"/>
</dbReference>
<dbReference type="InterPro" id="IPR050121">
    <property type="entry name" value="Cytochrome_P450_monoxygenase"/>
</dbReference>
<dbReference type="PANTHER" id="PTHR24305">
    <property type="entry name" value="CYTOCHROME P450"/>
    <property type="match status" value="1"/>
</dbReference>
<dbReference type="PANTHER" id="PTHR24305:SF107">
    <property type="entry name" value="P450, PUTATIVE (EUROFUNG)-RELATED"/>
    <property type="match status" value="1"/>
</dbReference>
<dbReference type="Pfam" id="PF00067">
    <property type="entry name" value="p450"/>
    <property type="match status" value="1"/>
</dbReference>
<dbReference type="PRINTS" id="PR00465">
    <property type="entry name" value="EP450IV"/>
</dbReference>
<dbReference type="PRINTS" id="PR00385">
    <property type="entry name" value="P450"/>
</dbReference>
<dbReference type="SUPFAM" id="SSF48264">
    <property type="entry name" value="Cytochrome P450"/>
    <property type="match status" value="1"/>
</dbReference>
<keyword id="KW-0349">Heme</keyword>
<keyword id="KW-0408">Iron</keyword>
<keyword id="KW-0479">Metal-binding</keyword>
<keyword id="KW-0503">Monooxygenase</keyword>
<keyword id="KW-0560">Oxidoreductase</keyword>
<keyword id="KW-1185">Reference proteome</keyword>
<proteinExistence type="evidence at transcript level"/>
<feature type="chain" id="PRO_0000450418" description="Cytochrome P450 monooxygenase acrF">
    <location>
        <begin position="1"/>
        <end position="494"/>
    </location>
</feature>
<feature type="binding site" description="axial binding residue" evidence="1">
    <location>
        <position position="420"/>
    </location>
    <ligand>
        <name>heme</name>
        <dbReference type="ChEBI" id="CHEBI:30413"/>
    </ligand>
    <ligandPart>
        <name>Fe</name>
        <dbReference type="ChEBI" id="CHEBI:18248"/>
    </ligandPart>
</feature>
<reference key="1">
    <citation type="journal article" date="2017" name="Genome Biol.">
        <title>Comparative genomics reveals high biological diversity and specific adaptations in the industrially and medically important fungal genus Aspergillus.</title>
        <authorList>
            <person name="de Vries R.P."/>
            <person name="Riley R."/>
            <person name="Wiebenga A."/>
            <person name="Aguilar-Osorio G."/>
            <person name="Amillis S."/>
            <person name="Uchima C.A."/>
            <person name="Anderluh G."/>
            <person name="Asadollahi M."/>
            <person name="Askin M."/>
            <person name="Barry K."/>
            <person name="Battaglia E."/>
            <person name="Bayram O."/>
            <person name="Benocci T."/>
            <person name="Braus-Stromeyer S.A."/>
            <person name="Caldana C."/>
            <person name="Canovas D."/>
            <person name="Cerqueira G.C."/>
            <person name="Chen F."/>
            <person name="Chen W."/>
            <person name="Choi C."/>
            <person name="Clum A."/>
            <person name="Dos Santos R.A."/>
            <person name="Damasio A.R."/>
            <person name="Diallinas G."/>
            <person name="Emri T."/>
            <person name="Fekete E."/>
            <person name="Flipphi M."/>
            <person name="Freyberg S."/>
            <person name="Gallo A."/>
            <person name="Gournas C."/>
            <person name="Habgood R."/>
            <person name="Hainaut M."/>
            <person name="Harispe M.L."/>
            <person name="Henrissat B."/>
            <person name="Hilden K.S."/>
            <person name="Hope R."/>
            <person name="Hossain A."/>
            <person name="Karabika E."/>
            <person name="Karaffa L."/>
            <person name="Karanyi Z."/>
            <person name="Krasevec N."/>
            <person name="Kuo A."/>
            <person name="Kusch H."/>
            <person name="LaButti K."/>
            <person name="Lagendijk E.L."/>
            <person name="Lapidus A."/>
            <person name="Levasseur A."/>
            <person name="Lindquist E."/>
            <person name="Lipzen A."/>
            <person name="Logrieco A.F."/>
            <person name="MacCabe A."/>
            <person name="Maekelae M.R."/>
            <person name="Malavazi I."/>
            <person name="Melin P."/>
            <person name="Meyer V."/>
            <person name="Mielnichuk N."/>
            <person name="Miskei M."/>
            <person name="Molnar A.P."/>
            <person name="Mule G."/>
            <person name="Ngan C.Y."/>
            <person name="Orejas M."/>
            <person name="Orosz E."/>
            <person name="Ouedraogo J.P."/>
            <person name="Overkamp K.M."/>
            <person name="Park H.-S."/>
            <person name="Perrone G."/>
            <person name="Piumi F."/>
            <person name="Punt P.J."/>
            <person name="Ram A.F."/>
            <person name="Ramon A."/>
            <person name="Rauscher S."/>
            <person name="Record E."/>
            <person name="Riano-Pachon D.M."/>
            <person name="Robert V."/>
            <person name="Roehrig J."/>
            <person name="Ruller R."/>
            <person name="Salamov A."/>
            <person name="Salih N.S."/>
            <person name="Samson R.A."/>
            <person name="Sandor E."/>
            <person name="Sanguinetti M."/>
            <person name="Schuetze T."/>
            <person name="Sepcic K."/>
            <person name="Shelest E."/>
            <person name="Sherlock G."/>
            <person name="Sophianopoulou V."/>
            <person name="Squina F.M."/>
            <person name="Sun H."/>
            <person name="Susca A."/>
            <person name="Todd R.B."/>
            <person name="Tsang A."/>
            <person name="Unkles S.E."/>
            <person name="van de Wiele N."/>
            <person name="van Rossen-Uffink D."/>
            <person name="Oliveira J.V."/>
            <person name="Vesth T.C."/>
            <person name="Visser J."/>
            <person name="Yu J.-H."/>
            <person name="Zhou M."/>
            <person name="Andersen M.R."/>
            <person name="Archer D.B."/>
            <person name="Baker S.E."/>
            <person name="Benoit I."/>
            <person name="Brakhage A.A."/>
            <person name="Braus G.H."/>
            <person name="Fischer R."/>
            <person name="Frisvad J.C."/>
            <person name="Goldman G.H."/>
            <person name="Houbraken J."/>
            <person name="Oakley B."/>
            <person name="Pocsi I."/>
            <person name="Scazzocchio C."/>
            <person name="Seiboth B."/>
            <person name="vanKuyk P.A."/>
            <person name="Wortman J."/>
            <person name="Dyer P.S."/>
            <person name="Grigoriev I.V."/>
        </authorList>
    </citation>
    <scope>NUCLEOTIDE SEQUENCE [LARGE SCALE GENOMIC DNA]</scope>
    <source>
        <strain>ATCC 16872 / CBS 172.66 / WB 5094</strain>
    </source>
</reference>
<reference key="2">
    <citation type="journal article" date="2020" name="Fungal Genet. Biol.">
        <title>Acurin A, a novel hybrid compound, biosynthesized by individually translated PKS- and NRPS-encoding genes in Aspergillus aculeatus.</title>
        <authorList>
            <person name="Wolff P.B."/>
            <person name="Nielsen M.L."/>
            <person name="Slot J.C."/>
            <person name="Andersen L.N."/>
            <person name="Petersen L.M."/>
            <person name="Isbrandt T."/>
            <person name="Holm D.K."/>
            <person name="Mortensen U.H."/>
            <person name="Noedvig C.S."/>
            <person name="Larsen T.O."/>
            <person name="Hoof J.B."/>
        </authorList>
    </citation>
    <scope>FUNCTION</scope>
    <scope>DISRUPTION PHENOTYPE</scope>
    <scope>PATHWAY</scope>
    <scope>INDUCTION</scope>
</reference>
<protein>
    <recommendedName>
        <fullName evidence="3">Cytochrome P450 monooxygenase acrF</fullName>
        <ecNumber evidence="2">1.-.-.-</ecNumber>
    </recommendedName>
    <alternativeName>
        <fullName evidence="3">Acurin A biosynthesis cluster protein F</fullName>
    </alternativeName>
</protein>
<sequence>MHVQSKAPKDLHPQAQMTMLQRLYKLGDMFTVDTWPLMDQMYLVANPKLAHQVSQDSSPFPKHPMITRFLKPLTGYNSVLAANDAKWKELRSLFAPGFSNAHLMTMVPLMVEKTEVFCDLLSEYAAKHELFSMEPMAARLTIDIIGIVVLGVDFKSLTRRDELVEAFRHLLDLLPNGQTLDINPVTHYLRRKYANTMDNYIRRVLRDRAANGANKKFRTLMDIAIERYEQLPNGSLFDCGFEQLAVDNLKTFVFAGHDTSSTTLSNIYHLLSKHPEVLAKVIEEHDQVLGKDTAAIGQLIRDQPSIINKLPYTTAVIRETLRLYPASGSLRMAPKDTTFHPDKAPAVTVPKGSLIWVGIHTIHHDAEFFPCPDEFHPERFMTAKTITLADGRTEAVTAGWNGHAPPADAYRPFEKGPRMCIGSEMAMIEIRVVLAMTLRRFRFESAYAEYRRRHPDEVEAAGGRTEAFGDEAYQVFSSTAKPKSGVPMYVYTKE</sequence>
<accession>A0A1L9WQW4</accession>
<comment type="function">
    <text evidence="2 5">Cytochrome P450 monooxygenase; part of the cluster that mediates the biosynthesis of acurin A, a highly reduced polyketide coupled to a serine via a peptide bond (PubMed:32234543). The activities of the highly reducing polyketide synthase acrA and the nonribosomal peptide synthetase acrB are collectively responsible for the synthesis of the acurin A core structure with a heptaketide backbone produced by acrA covalently fused to a L-serine by acrB (PubMed:32234543). After the formation of the PK-NRP hybrid product, it is detached from acrB by reductive release to set up the formation of the lactam ring by aldol condensation (Probable). The hydrolyase acrC then catalyzes water loss to generate a double bond in the ring (Probable). This double bond is probably reduced, which is followed by three oxidations at C-22 to generate the carboxylic acid moiety, involving probably the FAD-binding monooxygenase acrE and the cytochrome P450 monooxygenases acrD and acrF (Probable). Finally, a last methylation step performed by the O-methyltransferase acrG leads to the production of acurin A (Probable).</text>
</comment>
<comment type="cofactor">
    <cofactor evidence="1">
        <name>heme</name>
        <dbReference type="ChEBI" id="CHEBI:30413"/>
    </cofactor>
</comment>
<comment type="pathway">
    <text evidence="2">Secondary metabolite biosynthesis.</text>
</comment>
<comment type="induction">
    <text evidence="2">Expression is positively regulated by the acurin A cluster-specific transcription regulator acrR.</text>
</comment>
<comment type="disruption phenotype">
    <text evidence="2">Abolishes the production of acurin A.</text>
</comment>
<comment type="similarity">
    <text evidence="4">Belongs to the cytochrome P450 family.</text>
</comment>
<evidence type="ECO:0000250" key="1">
    <source>
        <dbReference type="UniProtKB" id="P04798"/>
    </source>
</evidence>
<evidence type="ECO:0000269" key="2">
    <source>
    </source>
</evidence>
<evidence type="ECO:0000303" key="3">
    <source>
    </source>
</evidence>
<evidence type="ECO:0000305" key="4"/>
<evidence type="ECO:0000305" key="5">
    <source>
    </source>
</evidence>
<organism>
    <name type="scientific">Aspergillus aculeatus (strain ATCC 16872 / CBS 172.66 / WB 5094)</name>
    <dbReference type="NCBI Taxonomy" id="690307"/>
    <lineage>
        <taxon>Eukaryota</taxon>
        <taxon>Fungi</taxon>
        <taxon>Dikarya</taxon>
        <taxon>Ascomycota</taxon>
        <taxon>Pezizomycotina</taxon>
        <taxon>Eurotiomycetes</taxon>
        <taxon>Eurotiomycetidae</taxon>
        <taxon>Eurotiales</taxon>
        <taxon>Aspergillaceae</taxon>
        <taxon>Aspergillus</taxon>
        <taxon>Aspergillus subgen. Circumdati</taxon>
    </lineage>
</organism>
<gene>
    <name evidence="3" type="primary">acrF</name>
    <name type="ORF">ASPACDRAFT_62004</name>
</gene>
<name>ACRF_ASPA1</name>